<comment type="function">
    <text evidence="1 2">Component of the viral envelope that plays a central role in virus morphogenesis and assembly via its interactions with other viral proteins.</text>
</comment>
<comment type="subunit">
    <text evidence="1 2">Homomultimer. Interacts with envelope E protein in the budding compartment of the host cell, which is located between endoplasmic reticulum and the Golgi complex. Forms a complex with HE and S proteins. Interacts with nucleocapsid N protein. This interaction probably participates in RNA packaging into the virus.</text>
</comment>
<comment type="subcellular location">
    <subcellularLocation>
        <location evidence="1">Virion membrane</location>
        <topology evidence="1">Multi-pass membrane protein</topology>
    </subcellularLocation>
    <subcellularLocation>
        <location evidence="1">Host Golgi apparatus membrane</location>
        <topology evidence="1">Multi-pass membrane protein</topology>
    </subcellularLocation>
    <text evidence="1">Largely embedded in the lipid bilayer.</text>
</comment>
<comment type="similarity">
    <text evidence="1">Belongs to the gammacoronaviruses M protein family.</text>
</comment>
<sequence length="225" mass="25466">MDNTTNCTLGTEQAVQLFKEYNLFVTAFLLFLTILLQYGYATRNKVIYILKMIVLWCFWPLNIAVGAISCIYPPNTGGLVAAIILTVFACLSFIGYWIQSFRLFKRCRSWWAFNPESNAVGSILLTNGQQCNFAIESVPMVLSPIIKNGVLYCEGQWLAKCEPDHLPKDIFVCTPDRRNIYRMVQRYTGDQSGNKKRFATFIYVKHSVDTGELESVATGGSSLYT</sequence>
<name>VME1_IBV6</name>
<proteinExistence type="inferred from homology"/>
<protein>
    <recommendedName>
        <fullName evidence="1">Membrane protein</fullName>
        <shortName evidence="1">M protein</shortName>
    </recommendedName>
    <alternativeName>
        <fullName evidence="1">E1 glycoprotein</fullName>
    </alternativeName>
    <alternativeName>
        <fullName evidence="1">Matrix glycoprotein</fullName>
    </alternativeName>
    <alternativeName>
        <fullName evidence="1">Membrane glycoprotein</fullName>
    </alternativeName>
</protein>
<evidence type="ECO:0000255" key="1">
    <source>
        <dbReference type="HAMAP-Rule" id="MF_04203"/>
    </source>
</evidence>
<evidence type="ECO:0000255" key="2">
    <source>
        <dbReference type="PROSITE-ProRule" id="PRU01275"/>
    </source>
</evidence>
<organism>
    <name type="scientific">Avian infectious bronchitis virus (strain 6/82)</name>
    <name type="common">IBV</name>
    <dbReference type="NCBI Taxonomy" id="11121"/>
    <lineage>
        <taxon>Viruses</taxon>
        <taxon>Riboviria</taxon>
        <taxon>Orthornavirae</taxon>
        <taxon>Pisuviricota</taxon>
        <taxon>Pisoniviricetes</taxon>
        <taxon>Nidovirales</taxon>
        <taxon>Cornidovirineae</taxon>
        <taxon>Coronaviridae</taxon>
        <taxon>Orthocoronavirinae</taxon>
        <taxon>Gammacoronavirus</taxon>
        <taxon>Igacovirus</taxon>
        <taxon>Avian coronavirus</taxon>
    </lineage>
</organism>
<organismHost>
    <name type="scientific">Gallus gallus</name>
    <name type="common">Chicken</name>
    <dbReference type="NCBI Taxonomy" id="9031"/>
</organismHost>
<reference key="1">
    <citation type="journal article" date="1986" name="Nucleic Acids Res.">
        <title>Nucleotide sequence encoding the membrane protein of the IBV strain 6/82.</title>
        <authorList>
            <person name="Binns M.M."/>
            <person name="Boursnell M.E.G."/>
            <person name="Tomley F.M."/>
            <person name="Brown T.D.K."/>
        </authorList>
    </citation>
    <scope>NUCLEOTIDE SEQUENCE [GENOMIC RNA]</scope>
</reference>
<keyword id="KW-0325">Glycoprotein</keyword>
<keyword id="KW-1040">Host Golgi apparatus</keyword>
<keyword id="KW-1043">Host membrane</keyword>
<keyword id="KW-0472">Membrane</keyword>
<keyword id="KW-0812">Transmembrane</keyword>
<keyword id="KW-1133">Transmembrane helix</keyword>
<keyword id="KW-0261">Viral envelope protein</keyword>
<keyword id="KW-0468">Viral matrix protein</keyword>
<keyword id="KW-0946">Virion</keyword>
<gene>
    <name evidence="1" type="primary">M</name>
</gene>
<accession>P05136</accession>
<dbReference type="EMBL" id="X04107">
    <property type="protein sequence ID" value="CAA27727.1"/>
    <property type="molecule type" value="Genomic_RNA"/>
</dbReference>
<dbReference type="EMBL" id="D00005">
    <property type="protein sequence ID" value="BAA00003.1"/>
    <property type="molecule type" value="Genomic_RNA"/>
</dbReference>
<dbReference type="PIR" id="A23649">
    <property type="entry name" value="MMIH68"/>
</dbReference>
<dbReference type="SMR" id="P05136"/>
<dbReference type="GO" id="GO:0044178">
    <property type="term" value="C:host cell Golgi membrane"/>
    <property type="evidence" value="ECO:0007669"/>
    <property type="project" value="UniProtKB-SubCell"/>
</dbReference>
<dbReference type="GO" id="GO:0016020">
    <property type="term" value="C:membrane"/>
    <property type="evidence" value="ECO:0007669"/>
    <property type="project" value="UniProtKB-UniRule"/>
</dbReference>
<dbReference type="GO" id="GO:0019031">
    <property type="term" value="C:viral envelope"/>
    <property type="evidence" value="ECO:0007669"/>
    <property type="project" value="UniProtKB-UniRule"/>
</dbReference>
<dbReference type="GO" id="GO:0055036">
    <property type="term" value="C:virion membrane"/>
    <property type="evidence" value="ECO:0007669"/>
    <property type="project" value="UniProtKB-SubCell"/>
</dbReference>
<dbReference type="GO" id="GO:0039660">
    <property type="term" value="F:structural constituent of virion"/>
    <property type="evidence" value="ECO:0007669"/>
    <property type="project" value="UniProtKB-UniRule"/>
</dbReference>
<dbReference type="CDD" id="cd21566">
    <property type="entry name" value="gammaCoV_M"/>
    <property type="match status" value="1"/>
</dbReference>
<dbReference type="HAMAP" id="MF_04203">
    <property type="entry name" value="GAMMA_CORONA_M"/>
    <property type="match status" value="1"/>
</dbReference>
<dbReference type="InterPro" id="IPR042550">
    <property type="entry name" value="GAMMA_CORONA_M"/>
</dbReference>
<dbReference type="InterPro" id="IPR002574">
    <property type="entry name" value="M_CoV"/>
</dbReference>
<dbReference type="Pfam" id="PF01635">
    <property type="entry name" value="CoV_M"/>
    <property type="match status" value="1"/>
</dbReference>
<dbReference type="PROSITE" id="PS51927">
    <property type="entry name" value="COV_M"/>
    <property type="match status" value="1"/>
</dbReference>
<feature type="chain" id="PRO_0000106046" description="Membrane protein">
    <location>
        <begin position="1"/>
        <end position="225"/>
    </location>
</feature>
<feature type="topological domain" description="Virion surface" evidence="1">
    <location>
        <begin position="1"/>
        <end position="20"/>
    </location>
</feature>
<feature type="transmembrane region" description="Helical" evidence="1">
    <location>
        <begin position="21"/>
        <end position="41"/>
    </location>
</feature>
<feature type="topological domain" description="Intravirion" evidence="1">
    <location>
        <begin position="42"/>
        <end position="51"/>
    </location>
</feature>
<feature type="transmembrane region" description="Helical" evidence="1">
    <location>
        <begin position="52"/>
        <end position="72"/>
    </location>
</feature>
<feature type="topological domain" description="Virion surface" evidence="1">
    <location>
        <begin position="73"/>
        <end position="77"/>
    </location>
</feature>
<feature type="transmembrane region" description="Helical" evidence="1">
    <location>
        <begin position="78"/>
        <end position="98"/>
    </location>
</feature>
<feature type="topological domain" description="Intravirion" evidence="1">
    <location>
        <begin position="99"/>
        <end position="225"/>
    </location>
</feature>